<reference key="1">
    <citation type="journal article" date="1987" name="J. Biol. Chem.">
        <title>Cloning and characterization of a 12-gene cluster from Bacillus subtilis encoding nine enzymes for de novo purine nucleotide synthesis.</title>
        <authorList>
            <person name="Ebbole D.J."/>
            <person name="Zalkin H."/>
        </authorList>
    </citation>
    <scope>NUCLEOTIDE SEQUENCE [GENOMIC DNA]</scope>
</reference>
<reference key="2">
    <citation type="journal article" date="1997" name="Nature">
        <title>The complete genome sequence of the Gram-positive bacterium Bacillus subtilis.</title>
        <authorList>
            <person name="Kunst F."/>
            <person name="Ogasawara N."/>
            <person name="Moszer I."/>
            <person name="Albertini A.M."/>
            <person name="Alloni G."/>
            <person name="Azevedo V."/>
            <person name="Bertero M.G."/>
            <person name="Bessieres P."/>
            <person name="Bolotin A."/>
            <person name="Borchert S."/>
            <person name="Borriss R."/>
            <person name="Boursier L."/>
            <person name="Brans A."/>
            <person name="Braun M."/>
            <person name="Brignell S.C."/>
            <person name="Bron S."/>
            <person name="Brouillet S."/>
            <person name="Bruschi C.V."/>
            <person name="Caldwell B."/>
            <person name="Capuano V."/>
            <person name="Carter N.M."/>
            <person name="Choi S.-K."/>
            <person name="Codani J.-J."/>
            <person name="Connerton I.F."/>
            <person name="Cummings N.J."/>
            <person name="Daniel R.A."/>
            <person name="Denizot F."/>
            <person name="Devine K.M."/>
            <person name="Duesterhoeft A."/>
            <person name="Ehrlich S.D."/>
            <person name="Emmerson P.T."/>
            <person name="Entian K.-D."/>
            <person name="Errington J."/>
            <person name="Fabret C."/>
            <person name="Ferrari E."/>
            <person name="Foulger D."/>
            <person name="Fritz C."/>
            <person name="Fujita M."/>
            <person name="Fujita Y."/>
            <person name="Fuma S."/>
            <person name="Galizzi A."/>
            <person name="Galleron N."/>
            <person name="Ghim S.-Y."/>
            <person name="Glaser P."/>
            <person name="Goffeau A."/>
            <person name="Golightly E.J."/>
            <person name="Grandi G."/>
            <person name="Guiseppi G."/>
            <person name="Guy B.J."/>
            <person name="Haga K."/>
            <person name="Haiech J."/>
            <person name="Harwood C.R."/>
            <person name="Henaut A."/>
            <person name="Hilbert H."/>
            <person name="Holsappel S."/>
            <person name="Hosono S."/>
            <person name="Hullo M.-F."/>
            <person name="Itaya M."/>
            <person name="Jones L.-M."/>
            <person name="Joris B."/>
            <person name="Karamata D."/>
            <person name="Kasahara Y."/>
            <person name="Klaerr-Blanchard M."/>
            <person name="Klein C."/>
            <person name="Kobayashi Y."/>
            <person name="Koetter P."/>
            <person name="Koningstein G."/>
            <person name="Krogh S."/>
            <person name="Kumano M."/>
            <person name="Kurita K."/>
            <person name="Lapidus A."/>
            <person name="Lardinois S."/>
            <person name="Lauber J."/>
            <person name="Lazarevic V."/>
            <person name="Lee S.-M."/>
            <person name="Levine A."/>
            <person name="Liu H."/>
            <person name="Masuda S."/>
            <person name="Mauel C."/>
            <person name="Medigue C."/>
            <person name="Medina N."/>
            <person name="Mellado R.P."/>
            <person name="Mizuno M."/>
            <person name="Moestl D."/>
            <person name="Nakai S."/>
            <person name="Noback M."/>
            <person name="Noone D."/>
            <person name="O'Reilly M."/>
            <person name="Ogawa K."/>
            <person name="Ogiwara A."/>
            <person name="Oudega B."/>
            <person name="Park S.-H."/>
            <person name="Parro V."/>
            <person name="Pohl T.M."/>
            <person name="Portetelle D."/>
            <person name="Porwollik S."/>
            <person name="Prescott A.M."/>
            <person name="Presecan E."/>
            <person name="Pujic P."/>
            <person name="Purnelle B."/>
            <person name="Rapoport G."/>
            <person name="Rey M."/>
            <person name="Reynolds S."/>
            <person name="Rieger M."/>
            <person name="Rivolta C."/>
            <person name="Rocha E."/>
            <person name="Roche B."/>
            <person name="Rose M."/>
            <person name="Sadaie Y."/>
            <person name="Sato T."/>
            <person name="Scanlan E."/>
            <person name="Schleich S."/>
            <person name="Schroeter R."/>
            <person name="Scoffone F."/>
            <person name="Sekiguchi J."/>
            <person name="Sekowska A."/>
            <person name="Seror S.J."/>
            <person name="Serror P."/>
            <person name="Shin B.-S."/>
            <person name="Soldo B."/>
            <person name="Sorokin A."/>
            <person name="Tacconi E."/>
            <person name="Takagi T."/>
            <person name="Takahashi H."/>
            <person name="Takemaru K."/>
            <person name="Takeuchi M."/>
            <person name="Tamakoshi A."/>
            <person name="Tanaka T."/>
            <person name="Terpstra P."/>
            <person name="Tognoni A."/>
            <person name="Tosato V."/>
            <person name="Uchiyama S."/>
            <person name="Vandenbol M."/>
            <person name="Vannier F."/>
            <person name="Vassarotti A."/>
            <person name="Viari A."/>
            <person name="Wambutt R."/>
            <person name="Wedler E."/>
            <person name="Wedler H."/>
            <person name="Weitzenegger T."/>
            <person name="Winters P."/>
            <person name="Wipat A."/>
            <person name="Yamamoto H."/>
            <person name="Yamane K."/>
            <person name="Yasumoto K."/>
            <person name="Yata K."/>
            <person name="Yoshida K."/>
            <person name="Yoshikawa H.-F."/>
            <person name="Zumstein E."/>
            <person name="Yoshikawa H."/>
            <person name="Danchin A."/>
        </authorList>
    </citation>
    <scope>NUCLEOTIDE SEQUENCE [LARGE SCALE GENOMIC DNA]</scope>
    <source>
        <strain>168</strain>
    </source>
</reference>
<reference key="3">
    <citation type="journal article" date="2004" name="Biochemistry">
        <title>The formylglycinamide ribonucleotide amidotransferase complex from Bacillus subtilis: metabolite-mediated complex formation.</title>
        <authorList>
            <person name="Hoskins A.A."/>
            <person name="Anand R."/>
            <person name="Ealick S.E."/>
            <person name="Stubbe J."/>
        </authorList>
    </citation>
    <scope>FUNCTION</scope>
    <scope>CATALYTIC ACTIVITY</scope>
    <scope>BIOPHYSICOCHEMICAL PROPERTIES</scope>
    <scope>MASS SPECTROMETRY</scope>
    <scope>SUBUNIT</scope>
</reference>
<name>PURQ_BACSU</name>
<keyword id="KW-0067">ATP-binding</keyword>
<keyword id="KW-0963">Cytoplasm</keyword>
<keyword id="KW-0315">Glutamine amidotransferase</keyword>
<keyword id="KW-0378">Hydrolase</keyword>
<keyword id="KW-0436">Ligase</keyword>
<keyword id="KW-0547">Nucleotide-binding</keyword>
<keyword id="KW-0658">Purine biosynthesis</keyword>
<keyword id="KW-1185">Reference proteome</keyword>
<protein>
    <recommendedName>
        <fullName evidence="1">Phosphoribosylformylglycinamidine synthase subunit PurQ</fullName>
        <shortName evidence="1">FGAM synthase</shortName>
        <ecNumber evidence="1">6.3.5.3</ecNumber>
    </recommendedName>
    <alternativeName>
        <fullName evidence="1">Formylglycinamide ribonucleotide amidotransferase subunit I</fullName>
        <shortName evidence="1">FGAR amidotransferase I</shortName>
        <shortName evidence="1">FGAR-AT I</shortName>
    </alternativeName>
    <alternativeName>
        <fullName evidence="1">Glutaminase PurQ</fullName>
        <ecNumber evidence="1">3.5.1.2</ecNumber>
    </alternativeName>
    <alternativeName>
        <fullName evidence="1">Phosphoribosylformylglycinamidine synthase subunit I</fullName>
    </alternativeName>
</protein>
<proteinExistence type="evidence at protein level"/>
<feature type="chain" id="PRO_0000100539" description="Phosphoribosylformylglycinamidine synthase subunit PurQ">
    <location>
        <begin position="1"/>
        <end position="227"/>
    </location>
</feature>
<feature type="domain" description="Glutamine amidotransferase type-1" evidence="1">
    <location>
        <begin position="3"/>
        <end position="225"/>
    </location>
</feature>
<feature type="active site" description="Nucleophile" evidence="1">
    <location>
        <position position="86"/>
    </location>
</feature>
<feature type="active site" evidence="1">
    <location>
        <position position="194"/>
    </location>
</feature>
<feature type="active site" evidence="1">
    <location>
        <position position="196"/>
    </location>
</feature>
<gene>
    <name evidence="1" type="primary">purQ</name>
    <name type="ordered locus">BSU06470</name>
</gene>
<sequence length="227" mass="24784">MKFAVIVLPGSNCDIDMYHAVKDELGHEVEYVWHEETSLDGFDGVLIPGGFSYGDYLRCGAIARFANIMPAVKQAAAEGKPVLGVCNGFQILQELGLLPGAMRRNKDLKFICRPVELIVQNDETLFTASYEKGESITIPVAHGEGNFYCDDETLATLKENNQIAFTYGSNINGSVSDIAGVVNEKGNVLGMMPHPERAVDELLGSADGLKLFQSIVKNWRETHVTTA</sequence>
<organism>
    <name type="scientific">Bacillus subtilis (strain 168)</name>
    <dbReference type="NCBI Taxonomy" id="224308"/>
    <lineage>
        <taxon>Bacteria</taxon>
        <taxon>Bacillati</taxon>
        <taxon>Bacillota</taxon>
        <taxon>Bacilli</taxon>
        <taxon>Bacillales</taxon>
        <taxon>Bacillaceae</taxon>
        <taxon>Bacillus</taxon>
    </lineage>
</organism>
<accession>P12041</accession>
<dbReference type="EC" id="6.3.5.3" evidence="1"/>
<dbReference type="EC" id="3.5.1.2" evidence="1"/>
<dbReference type="EMBL" id="J02732">
    <property type="protein sequence ID" value="AAA22678.1"/>
    <property type="molecule type" value="Genomic_DNA"/>
</dbReference>
<dbReference type="EMBL" id="AL009126">
    <property type="protein sequence ID" value="CAB12467.1"/>
    <property type="molecule type" value="Genomic_DNA"/>
</dbReference>
<dbReference type="PIR" id="F29326">
    <property type="entry name" value="SYBS1G"/>
</dbReference>
<dbReference type="RefSeq" id="NP_388529.1">
    <property type="nucleotide sequence ID" value="NC_000964.3"/>
</dbReference>
<dbReference type="RefSeq" id="WP_003243954.1">
    <property type="nucleotide sequence ID" value="NZ_OZ025638.1"/>
</dbReference>
<dbReference type="SMR" id="P12041"/>
<dbReference type="FunCoup" id="P12041">
    <property type="interactions" value="230"/>
</dbReference>
<dbReference type="IntAct" id="P12041">
    <property type="interactions" value="5"/>
</dbReference>
<dbReference type="STRING" id="224308.BSU06470"/>
<dbReference type="PaxDb" id="224308-BSU06470"/>
<dbReference type="EnsemblBacteria" id="CAB12467">
    <property type="protein sequence ID" value="CAB12467"/>
    <property type="gene ID" value="BSU_06470"/>
</dbReference>
<dbReference type="GeneID" id="938760"/>
<dbReference type="KEGG" id="bsu:BSU06470"/>
<dbReference type="PATRIC" id="fig|224308.179.peg.703"/>
<dbReference type="eggNOG" id="COG0047">
    <property type="taxonomic scope" value="Bacteria"/>
</dbReference>
<dbReference type="InParanoid" id="P12041"/>
<dbReference type="OrthoDB" id="9804441at2"/>
<dbReference type="PhylomeDB" id="P12041"/>
<dbReference type="BioCyc" id="BSUB:BSU06470-MONOMER"/>
<dbReference type="BioCyc" id="MetaCyc:BSU06470-MONOMER"/>
<dbReference type="UniPathway" id="UPA00074">
    <property type="reaction ID" value="UER00128"/>
</dbReference>
<dbReference type="Proteomes" id="UP000001570">
    <property type="component" value="Chromosome"/>
</dbReference>
<dbReference type="GO" id="GO:0005737">
    <property type="term" value="C:cytoplasm"/>
    <property type="evidence" value="ECO:0007669"/>
    <property type="project" value="UniProtKB-SubCell"/>
</dbReference>
<dbReference type="GO" id="GO:0005524">
    <property type="term" value="F:ATP binding"/>
    <property type="evidence" value="ECO:0007669"/>
    <property type="project" value="UniProtKB-KW"/>
</dbReference>
<dbReference type="GO" id="GO:0004359">
    <property type="term" value="F:glutaminase activity"/>
    <property type="evidence" value="ECO:0007669"/>
    <property type="project" value="UniProtKB-EC"/>
</dbReference>
<dbReference type="GO" id="GO:0004642">
    <property type="term" value="F:phosphoribosylformylglycinamidine synthase activity"/>
    <property type="evidence" value="ECO:0007669"/>
    <property type="project" value="UniProtKB-UniRule"/>
</dbReference>
<dbReference type="GO" id="GO:0006189">
    <property type="term" value="P:'de novo' IMP biosynthetic process"/>
    <property type="evidence" value="ECO:0007669"/>
    <property type="project" value="UniProtKB-UniRule"/>
</dbReference>
<dbReference type="CDD" id="cd01740">
    <property type="entry name" value="GATase1_FGAR_AT"/>
    <property type="match status" value="1"/>
</dbReference>
<dbReference type="FunFam" id="3.40.50.880:FF:000019">
    <property type="entry name" value="Phosphoribosylformylglycinamidine synthase subunit PurQ"/>
    <property type="match status" value="1"/>
</dbReference>
<dbReference type="Gene3D" id="3.40.50.880">
    <property type="match status" value="1"/>
</dbReference>
<dbReference type="HAMAP" id="MF_00421">
    <property type="entry name" value="PurQ"/>
    <property type="match status" value="1"/>
</dbReference>
<dbReference type="InterPro" id="IPR029062">
    <property type="entry name" value="Class_I_gatase-like"/>
</dbReference>
<dbReference type="InterPro" id="IPR010075">
    <property type="entry name" value="PRibForGlyAmidine_synth_PurQ"/>
</dbReference>
<dbReference type="NCBIfam" id="TIGR01737">
    <property type="entry name" value="FGAM_synth_I"/>
    <property type="match status" value="1"/>
</dbReference>
<dbReference type="NCBIfam" id="NF002957">
    <property type="entry name" value="PRK03619.1"/>
    <property type="match status" value="1"/>
</dbReference>
<dbReference type="PANTHER" id="PTHR47552">
    <property type="entry name" value="PHOSPHORIBOSYLFORMYLGLYCINAMIDINE SYNTHASE SUBUNIT PURQ"/>
    <property type="match status" value="1"/>
</dbReference>
<dbReference type="PANTHER" id="PTHR47552:SF1">
    <property type="entry name" value="PHOSPHORIBOSYLFORMYLGLYCINAMIDINE SYNTHASE SUBUNIT PURQ"/>
    <property type="match status" value="1"/>
</dbReference>
<dbReference type="Pfam" id="PF13507">
    <property type="entry name" value="GATase_5"/>
    <property type="match status" value="1"/>
</dbReference>
<dbReference type="PIRSF" id="PIRSF001586">
    <property type="entry name" value="FGAM_synth_I"/>
    <property type="match status" value="1"/>
</dbReference>
<dbReference type="SMART" id="SM01211">
    <property type="entry name" value="GATase_5"/>
    <property type="match status" value="1"/>
</dbReference>
<dbReference type="SUPFAM" id="SSF52317">
    <property type="entry name" value="Class I glutamine amidotransferase-like"/>
    <property type="match status" value="1"/>
</dbReference>
<dbReference type="PROSITE" id="PS51273">
    <property type="entry name" value="GATASE_TYPE_1"/>
    <property type="match status" value="1"/>
</dbReference>
<evidence type="ECO:0000255" key="1">
    <source>
        <dbReference type="HAMAP-Rule" id="MF_00421"/>
    </source>
</evidence>
<evidence type="ECO:0000269" key="2">
    <source>
    </source>
</evidence>
<comment type="function">
    <text evidence="1 2">Part of the phosphoribosylformylglycinamidine synthase complex involved in the purines biosynthetic pathway. Catalyzes the ATP-dependent conversion of formylglycinamide ribonucleotide (FGAR) and glutamine to yield formylglycinamidine ribonucleotide (FGAM) and glutamate. The FGAM synthase complex is composed of three subunits. PurQ produces an ammonia molecule by converting glutamine to glutamate. PurL transfers the ammonia molecule to FGAR to form FGAM in an ATP-dependent manner. PurS interacts with PurQ and PurL and is thought to assist in the transfer of the ammonia molecule from PurQ to PurL.</text>
</comment>
<comment type="catalytic activity">
    <reaction evidence="1 2">
        <text>N(2)-formyl-N(1)-(5-phospho-beta-D-ribosyl)glycinamide + L-glutamine + ATP + H2O = 2-formamido-N(1)-(5-O-phospho-beta-D-ribosyl)acetamidine + L-glutamate + ADP + phosphate + H(+)</text>
        <dbReference type="Rhea" id="RHEA:17129"/>
        <dbReference type="ChEBI" id="CHEBI:15377"/>
        <dbReference type="ChEBI" id="CHEBI:15378"/>
        <dbReference type="ChEBI" id="CHEBI:29985"/>
        <dbReference type="ChEBI" id="CHEBI:30616"/>
        <dbReference type="ChEBI" id="CHEBI:43474"/>
        <dbReference type="ChEBI" id="CHEBI:58359"/>
        <dbReference type="ChEBI" id="CHEBI:147286"/>
        <dbReference type="ChEBI" id="CHEBI:147287"/>
        <dbReference type="ChEBI" id="CHEBI:456216"/>
        <dbReference type="EC" id="6.3.5.3"/>
    </reaction>
</comment>
<comment type="catalytic activity">
    <reaction evidence="1 2">
        <text>L-glutamine + H2O = L-glutamate + NH4(+)</text>
        <dbReference type="Rhea" id="RHEA:15889"/>
        <dbReference type="ChEBI" id="CHEBI:15377"/>
        <dbReference type="ChEBI" id="CHEBI:28938"/>
        <dbReference type="ChEBI" id="CHEBI:29985"/>
        <dbReference type="ChEBI" id="CHEBI:58359"/>
        <dbReference type="EC" id="3.5.1.2"/>
    </reaction>
</comment>
<comment type="biophysicochemical properties">
    <kinetics>
        <KM evidence="2">181 uM for ATP (FGAM synthase activity at pH 7.2 and 37 degrees Celsius)</KM>
        <KM evidence="2">507 uM for FGAR (FGAM synthase activity at pH 7.2 and 37 degrees Celsius)</KM>
        <KM evidence="2">1.3 mM for glutamine (FGAM synthase activity at pH 7.2 and 37 degrees Celsius)</KM>
        <KM evidence="2">2.5 mM for glutamine (Glutaminase activity at pH 7.2 and 37 degrees Celsius)</KM>
        <text>kcat is 2.49 sec(-1) for FGAM synthase activity (at pH 7.2 and 37 degrees Celsius). kcat is 0.002 sec(-1) for glutaminase activity (at pH 7.2 and 37 degrees Celsius).</text>
    </kinetics>
</comment>
<comment type="pathway">
    <text evidence="1">Purine metabolism; IMP biosynthesis via de novo pathway; 5-amino-1-(5-phospho-D-ribosyl)imidazole from N(2)-formyl-N(1)-(5-phospho-D-ribosyl)glycinamide: step 1/2.</text>
</comment>
<comment type="subunit">
    <text evidence="1 2">Part of the FGAM synthase complex composed of 1 PurL, 1 PurQ and 2 PurS subunits.</text>
</comment>
<comment type="subcellular location">
    <subcellularLocation>
        <location evidence="1">Cytoplasm</location>
    </subcellularLocation>
</comment>
<comment type="mass spectrometry" mass="24816.0" method="Electrospray" evidence="2"/>